<organism>
    <name type="scientific">Syntrichia ruralis</name>
    <name type="common">Great hairy screw-moss</name>
    <name type="synonym">Tortula ruralis</name>
    <dbReference type="NCBI Taxonomy" id="38588"/>
    <lineage>
        <taxon>Eukaryota</taxon>
        <taxon>Viridiplantae</taxon>
        <taxon>Streptophyta</taxon>
        <taxon>Embryophyta</taxon>
        <taxon>Bryophyta</taxon>
        <taxon>Bryophytina</taxon>
        <taxon>Bryopsida</taxon>
        <taxon>Dicranidae</taxon>
        <taxon>Pottiales</taxon>
        <taxon>Pottiaceae</taxon>
        <taxon>Syntrichia</taxon>
    </lineage>
</organism>
<evidence type="ECO:0000305" key="1"/>
<feature type="chain" id="PRO_0000128627" description="Large ribosomal subunit protein uL14">
    <location>
        <begin position="1"/>
        <end position="139"/>
    </location>
</feature>
<accession>Q9XEK8</accession>
<reference key="1">
    <citation type="submission" date="1998-11" db="EMBL/GenBank/DDBJ databases">
        <title>Environmental regulation of three ribosomal proteins in the desiccation-tolerant Bryophyte, Tortula ruralis.</title>
        <authorList>
            <person name="Wood A.J."/>
            <person name="Duff R.J."/>
            <person name="Oliver M.J."/>
        </authorList>
    </citation>
    <scope>NUCLEOTIDE SEQUENCE [MRNA]</scope>
</reference>
<proteinExistence type="evidence at transcript level"/>
<keyword id="KW-0687">Ribonucleoprotein</keyword>
<keyword id="KW-0689">Ribosomal protein</keyword>
<name>RL23_SYNRU</name>
<gene>
    <name type="primary">RPL23</name>
</gene>
<dbReference type="EMBL" id="AF108726">
    <property type="protein sequence ID" value="AAD23966.1"/>
    <property type="molecule type" value="mRNA"/>
</dbReference>
<dbReference type="SMR" id="Q9XEK8"/>
<dbReference type="GO" id="GO:0022625">
    <property type="term" value="C:cytosolic large ribosomal subunit"/>
    <property type="evidence" value="ECO:0007669"/>
    <property type="project" value="TreeGrafter"/>
</dbReference>
<dbReference type="GO" id="GO:0070180">
    <property type="term" value="F:large ribosomal subunit rRNA binding"/>
    <property type="evidence" value="ECO:0007669"/>
    <property type="project" value="TreeGrafter"/>
</dbReference>
<dbReference type="GO" id="GO:0003735">
    <property type="term" value="F:structural constituent of ribosome"/>
    <property type="evidence" value="ECO:0007669"/>
    <property type="project" value="InterPro"/>
</dbReference>
<dbReference type="GO" id="GO:0006412">
    <property type="term" value="P:translation"/>
    <property type="evidence" value="ECO:0007669"/>
    <property type="project" value="InterPro"/>
</dbReference>
<dbReference type="CDD" id="cd00337">
    <property type="entry name" value="Ribosomal_uL14"/>
    <property type="match status" value="1"/>
</dbReference>
<dbReference type="FunFam" id="2.40.150.20:FF:000003">
    <property type="entry name" value="60S ribosomal protein L23"/>
    <property type="match status" value="1"/>
</dbReference>
<dbReference type="Gene3D" id="2.40.150.20">
    <property type="entry name" value="Ribosomal protein L14"/>
    <property type="match status" value="1"/>
</dbReference>
<dbReference type="HAMAP" id="MF_01367">
    <property type="entry name" value="Ribosomal_uL14"/>
    <property type="match status" value="1"/>
</dbReference>
<dbReference type="InterPro" id="IPR000218">
    <property type="entry name" value="Ribosomal_uL14"/>
</dbReference>
<dbReference type="InterPro" id="IPR019972">
    <property type="entry name" value="Ribosomal_uL14_CS"/>
</dbReference>
<dbReference type="InterPro" id="IPR036853">
    <property type="entry name" value="Ribosomal_uL14_sf"/>
</dbReference>
<dbReference type="PANTHER" id="PTHR11761">
    <property type="entry name" value="50S/60S RIBOSOMAL PROTEIN L14/L23"/>
    <property type="match status" value="1"/>
</dbReference>
<dbReference type="PANTHER" id="PTHR11761:SF8">
    <property type="entry name" value="LARGE RIBOSOMAL SUBUNIT PROTEIN UL14"/>
    <property type="match status" value="1"/>
</dbReference>
<dbReference type="Pfam" id="PF00238">
    <property type="entry name" value="Ribosomal_L14"/>
    <property type="match status" value="1"/>
</dbReference>
<dbReference type="SMART" id="SM01374">
    <property type="entry name" value="Ribosomal_L14"/>
    <property type="match status" value="1"/>
</dbReference>
<dbReference type="SUPFAM" id="SSF50193">
    <property type="entry name" value="Ribosomal protein L14"/>
    <property type="match status" value="1"/>
</dbReference>
<dbReference type="PROSITE" id="PS00049">
    <property type="entry name" value="RIBOSOMAL_L14"/>
    <property type="match status" value="1"/>
</dbReference>
<comment type="similarity">
    <text evidence="1">Belongs to the universal ribosomal protein uL14 family.</text>
</comment>
<sequence length="139" mass="14852">MSKRGRGGSSGNKFRMSLGLPVGAVVNCADNTGAKNLYVISSGVRGRLNRLPAAAVGDMVMATVKKGKPDLRKKVMPAVIVRQRKPWRRKDGVFMYFEDNAGVIVNPKGEMNPSAITGPIGKECADLWPRIASAANAIV</sequence>
<protein>
    <recommendedName>
        <fullName evidence="1">Large ribosomal subunit protein uL14</fullName>
    </recommendedName>
    <alternativeName>
        <fullName>60S ribosomal protein L23</fullName>
    </alternativeName>
    <alternativeName>
        <fullName>L17</fullName>
    </alternativeName>
</protein>